<comment type="function">
    <text evidence="1">Catalyzes the oxidative decarboxylation of isocitrate to 2-oxoglutarate and carbon dioxide with the concomitant reduction of NADP(+).</text>
</comment>
<comment type="catalytic activity">
    <reaction evidence="1">
        <text>D-threo-isocitrate + NADP(+) = 2-oxoglutarate + CO2 + NADPH</text>
        <dbReference type="Rhea" id="RHEA:19629"/>
        <dbReference type="ChEBI" id="CHEBI:15562"/>
        <dbReference type="ChEBI" id="CHEBI:16526"/>
        <dbReference type="ChEBI" id="CHEBI:16810"/>
        <dbReference type="ChEBI" id="CHEBI:57783"/>
        <dbReference type="ChEBI" id="CHEBI:58349"/>
        <dbReference type="EC" id="1.1.1.42"/>
    </reaction>
</comment>
<comment type="cofactor">
    <cofactor evidence="1">
        <name>Mg(2+)</name>
        <dbReference type="ChEBI" id="CHEBI:18420"/>
    </cofactor>
    <cofactor evidence="1">
        <name>Mn(2+)</name>
        <dbReference type="ChEBI" id="CHEBI:29035"/>
    </cofactor>
    <text evidence="1">Binds 1 Mg(2+) or Mn(2+) ion per subunit.</text>
</comment>
<comment type="subunit">
    <text evidence="1">Homodimer.</text>
</comment>
<comment type="similarity">
    <text evidence="2">Belongs to the isocitrate and isopropylmalate dehydrogenases family.</text>
</comment>
<organism>
    <name type="scientific">Helicobacter pylori (strain J99 / ATCC 700824)</name>
    <name type="common">Campylobacter pylori J99</name>
    <dbReference type="NCBI Taxonomy" id="85963"/>
    <lineage>
        <taxon>Bacteria</taxon>
        <taxon>Pseudomonadati</taxon>
        <taxon>Campylobacterota</taxon>
        <taxon>Epsilonproteobacteria</taxon>
        <taxon>Campylobacterales</taxon>
        <taxon>Helicobacteraceae</taxon>
        <taxon>Helicobacter</taxon>
    </lineage>
</organism>
<evidence type="ECO:0000250" key="1">
    <source>
        <dbReference type="UniProtKB" id="P08200"/>
    </source>
</evidence>
<evidence type="ECO:0000305" key="2"/>
<dbReference type="EC" id="1.1.1.42" evidence="1"/>
<dbReference type="EMBL" id="AE001439">
    <property type="protein sequence ID" value="AAD05607.1"/>
    <property type="molecule type" value="Genomic_DNA"/>
</dbReference>
<dbReference type="PIR" id="E71982">
    <property type="entry name" value="E71982"/>
</dbReference>
<dbReference type="RefSeq" id="WP_000323928.1">
    <property type="nucleotide sequence ID" value="NC_000921.1"/>
</dbReference>
<dbReference type="SMR" id="Q9ZN36"/>
<dbReference type="KEGG" id="hpj:jhp_0023"/>
<dbReference type="eggNOG" id="COG0538">
    <property type="taxonomic scope" value="Bacteria"/>
</dbReference>
<dbReference type="Proteomes" id="UP000000804">
    <property type="component" value="Chromosome"/>
</dbReference>
<dbReference type="GO" id="GO:0004450">
    <property type="term" value="F:isocitrate dehydrogenase (NADP+) activity"/>
    <property type="evidence" value="ECO:0007669"/>
    <property type="project" value="UniProtKB-EC"/>
</dbReference>
<dbReference type="GO" id="GO:0000287">
    <property type="term" value="F:magnesium ion binding"/>
    <property type="evidence" value="ECO:0007669"/>
    <property type="project" value="InterPro"/>
</dbReference>
<dbReference type="GO" id="GO:0051287">
    <property type="term" value="F:NAD binding"/>
    <property type="evidence" value="ECO:0007669"/>
    <property type="project" value="InterPro"/>
</dbReference>
<dbReference type="GO" id="GO:0006097">
    <property type="term" value="P:glyoxylate cycle"/>
    <property type="evidence" value="ECO:0007669"/>
    <property type="project" value="UniProtKB-KW"/>
</dbReference>
<dbReference type="GO" id="GO:0006099">
    <property type="term" value="P:tricarboxylic acid cycle"/>
    <property type="evidence" value="ECO:0007669"/>
    <property type="project" value="UniProtKB-KW"/>
</dbReference>
<dbReference type="Gene3D" id="3.40.718.10">
    <property type="entry name" value="Isopropylmalate Dehydrogenase"/>
    <property type="match status" value="1"/>
</dbReference>
<dbReference type="InterPro" id="IPR019818">
    <property type="entry name" value="IsoCit/isopropylmalate_DH_CS"/>
</dbReference>
<dbReference type="InterPro" id="IPR004439">
    <property type="entry name" value="Isocitrate_DH_NADP_dimer_prok"/>
</dbReference>
<dbReference type="InterPro" id="IPR024084">
    <property type="entry name" value="IsoPropMal-DH-like_dom"/>
</dbReference>
<dbReference type="NCBIfam" id="NF005425">
    <property type="entry name" value="PRK07006.1"/>
    <property type="match status" value="1"/>
</dbReference>
<dbReference type="NCBIfam" id="TIGR00183">
    <property type="entry name" value="prok_nadp_idh"/>
    <property type="match status" value="1"/>
</dbReference>
<dbReference type="PANTHER" id="PTHR43504">
    <property type="entry name" value="ISOCITRATE DEHYDROGENASE [NADP]"/>
    <property type="match status" value="1"/>
</dbReference>
<dbReference type="PANTHER" id="PTHR43504:SF1">
    <property type="entry name" value="ISOCITRATE DEHYDROGENASE [NADP]"/>
    <property type="match status" value="1"/>
</dbReference>
<dbReference type="Pfam" id="PF00180">
    <property type="entry name" value="Iso_dh"/>
    <property type="match status" value="1"/>
</dbReference>
<dbReference type="SMART" id="SM01329">
    <property type="entry name" value="Iso_dh"/>
    <property type="match status" value="1"/>
</dbReference>
<dbReference type="SUPFAM" id="SSF53659">
    <property type="entry name" value="Isocitrate/Isopropylmalate dehydrogenase-like"/>
    <property type="match status" value="1"/>
</dbReference>
<dbReference type="PROSITE" id="PS00470">
    <property type="entry name" value="IDH_IMDH"/>
    <property type="match status" value="1"/>
</dbReference>
<feature type="chain" id="PRO_0000083553" description="Isocitrate dehydrogenase [NADP]">
    <location>
        <begin position="1"/>
        <end position="425"/>
    </location>
</feature>
<feature type="binding site" evidence="1">
    <location>
        <position position="114"/>
    </location>
    <ligand>
        <name>NADP(+)</name>
        <dbReference type="ChEBI" id="CHEBI:58349"/>
    </ligand>
</feature>
<feature type="binding site" evidence="1">
    <location>
        <position position="123"/>
    </location>
    <ligand>
        <name>D-threo-isocitrate</name>
        <dbReference type="ChEBI" id="CHEBI:15562"/>
    </ligand>
</feature>
<feature type="binding site" evidence="1">
    <location>
        <position position="125"/>
    </location>
    <ligand>
        <name>D-threo-isocitrate</name>
        <dbReference type="ChEBI" id="CHEBI:15562"/>
    </ligand>
</feature>
<feature type="binding site" evidence="1">
    <location>
        <position position="129"/>
    </location>
    <ligand>
        <name>D-threo-isocitrate</name>
        <dbReference type="ChEBI" id="CHEBI:15562"/>
    </ligand>
</feature>
<feature type="binding site" evidence="1">
    <location>
        <position position="139"/>
    </location>
    <ligand>
        <name>D-threo-isocitrate</name>
        <dbReference type="ChEBI" id="CHEBI:15562"/>
    </ligand>
</feature>
<feature type="binding site" evidence="1">
    <location>
        <position position="162"/>
    </location>
    <ligand>
        <name>D-threo-isocitrate</name>
        <dbReference type="ChEBI" id="CHEBI:15562"/>
    </ligand>
</feature>
<feature type="binding site" evidence="1">
    <location>
        <position position="316"/>
    </location>
    <ligand>
        <name>Mg(2+)</name>
        <dbReference type="ChEBI" id="CHEBI:18420"/>
    </ligand>
</feature>
<feature type="binding site" evidence="1">
    <location>
        <begin position="348"/>
        <end position="354"/>
    </location>
    <ligand>
        <name>NADP(+)</name>
        <dbReference type="ChEBI" id="CHEBI:58349"/>
    </ligand>
</feature>
<feature type="binding site" evidence="1">
    <location>
        <position position="361"/>
    </location>
    <ligand>
        <name>NADP(+)</name>
        <dbReference type="ChEBI" id="CHEBI:58349"/>
    </ligand>
</feature>
<feature type="binding site" evidence="1">
    <location>
        <position position="400"/>
    </location>
    <ligand>
        <name>NADP(+)</name>
        <dbReference type="ChEBI" id="CHEBI:58349"/>
    </ligand>
</feature>
<feature type="binding site" evidence="1">
    <location>
        <position position="404"/>
    </location>
    <ligand>
        <name>NADP(+)</name>
        <dbReference type="ChEBI" id="CHEBI:58349"/>
    </ligand>
</feature>
<feature type="site" description="Critical for catalysis" evidence="1">
    <location>
        <position position="169"/>
    </location>
</feature>
<feature type="site" description="Critical for catalysis" evidence="1">
    <location>
        <position position="239"/>
    </location>
</feature>
<reference key="1">
    <citation type="journal article" date="1999" name="Nature">
        <title>Genomic sequence comparison of two unrelated isolates of the human gastric pathogen Helicobacter pylori.</title>
        <authorList>
            <person name="Alm R.A."/>
            <person name="Ling L.-S.L."/>
            <person name="Moir D.T."/>
            <person name="King B.L."/>
            <person name="Brown E.D."/>
            <person name="Doig P.C."/>
            <person name="Smith D.R."/>
            <person name="Noonan B."/>
            <person name="Guild B.C."/>
            <person name="deJonge B.L."/>
            <person name="Carmel G."/>
            <person name="Tummino P.J."/>
            <person name="Caruso A."/>
            <person name="Uria-Nickelsen M."/>
            <person name="Mills D.M."/>
            <person name="Ives C."/>
            <person name="Gibson R."/>
            <person name="Merberg D."/>
            <person name="Mills S.D."/>
            <person name="Jiang Q."/>
            <person name="Taylor D.E."/>
            <person name="Vovis G.F."/>
            <person name="Trust T.J."/>
        </authorList>
    </citation>
    <scope>NUCLEOTIDE SEQUENCE [LARGE SCALE GENOMIC DNA]</scope>
    <source>
        <strain>J99 / ATCC 700824</strain>
    </source>
</reference>
<keyword id="KW-0329">Glyoxylate bypass</keyword>
<keyword id="KW-0460">Magnesium</keyword>
<keyword id="KW-0464">Manganese</keyword>
<keyword id="KW-0479">Metal-binding</keyword>
<keyword id="KW-0521">NADP</keyword>
<keyword id="KW-0560">Oxidoreductase</keyword>
<keyword id="KW-0816">Tricarboxylic acid cycle</keyword>
<name>IDH_HELPJ</name>
<sequence>MAYNPKILQKPKEGEEITIKDGKLHVPNYPIIPFIEGDGIGSDITPAMIKVVDSAVQKAYKGEKKIAWYEVFVGEKCYQKFKDHKELSPEEQWLLPDTIEAINHYKVSIKGPLTTPIGEGFRSLNVALRQKMDLYVCLRPVRWYGSPSPVKEPQKVDMVIFRENSEDIYAGIEWQEGSAEAKKLIHFLQNELKVEKIRFPESSGVGIKPISKEGTERLVRKAIEYAIDNDKPSVTFVHKGNIMKYTEGAFMKWGYALAQKEFNAQVIDKGPWCSLKNPKTGKEIIIKDMIADAFLQQILLRPSEYSVIATMNLNGDYISDALAAMVGGIGIAPGANLNDTVGMFEATHGTAPKYAGLDKVNPGSIILSAEMMLRHMGWVEAADLIVSAMEKAIKSKKVTYDFARLMDGAKEVKCSEFASVMIENM</sequence>
<gene>
    <name type="primary">icd</name>
    <name type="ordered locus">jhp_0023</name>
</gene>
<proteinExistence type="inferred from homology"/>
<accession>Q9ZN36</accession>
<protein>
    <recommendedName>
        <fullName>Isocitrate dehydrogenase [NADP]</fullName>
        <shortName>IDH</shortName>
        <ecNumber evidence="1">1.1.1.42</ecNumber>
    </recommendedName>
    <alternativeName>
        <fullName>IDP</fullName>
    </alternativeName>
    <alternativeName>
        <fullName>NADP(+)-specific ICDH</fullName>
    </alternativeName>
    <alternativeName>
        <fullName>Oxalosuccinate decarboxylase</fullName>
    </alternativeName>
</protein>